<evidence type="ECO:0000250" key="1"/>
<evidence type="ECO:0000250" key="2">
    <source>
        <dbReference type="UniProtKB" id="A0A0H2URK1"/>
    </source>
</evidence>
<evidence type="ECO:0000250" key="3">
    <source>
        <dbReference type="UniProtKB" id="Q2FUW1"/>
    </source>
</evidence>
<evidence type="ECO:0000255" key="4">
    <source>
        <dbReference type="PROSITE-ProRule" id="PRU00477"/>
    </source>
</evidence>
<evidence type="ECO:0000256" key="5">
    <source>
        <dbReference type="SAM" id="MobiDB-lite"/>
    </source>
</evidence>
<evidence type="ECO:0000305" key="6"/>
<dbReference type="EMBL" id="BA000017">
    <property type="protein sequence ID" value="BAB58816.1"/>
    <property type="molecule type" value="Genomic_DNA"/>
</dbReference>
<dbReference type="RefSeq" id="WP_000044547.1">
    <property type="nucleotide sequence ID" value="NC_002758.2"/>
</dbReference>
<dbReference type="SMR" id="Q99QY4"/>
<dbReference type="KEGG" id="sav:SAV2654"/>
<dbReference type="HOGENOM" id="CLU_002109_0_0_9"/>
<dbReference type="Proteomes" id="UP000002481">
    <property type="component" value="Chromosome"/>
</dbReference>
<dbReference type="GO" id="GO:0005576">
    <property type="term" value="C:extracellular region"/>
    <property type="evidence" value="ECO:0007669"/>
    <property type="project" value="UniProtKB-KW"/>
</dbReference>
<dbReference type="GO" id="GO:0016020">
    <property type="term" value="C:membrane"/>
    <property type="evidence" value="ECO:0007669"/>
    <property type="project" value="InterPro"/>
</dbReference>
<dbReference type="GO" id="GO:0005509">
    <property type="term" value="F:calcium ion binding"/>
    <property type="evidence" value="ECO:0007669"/>
    <property type="project" value="InterPro"/>
</dbReference>
<dbReference type="GO" id="GO:0007155">
    <property type="term" value="P:cell adhesion"/>
    <property type="evidence" value="ECO:0007669"/>
    <property type="project" value="UniProtKB-KW"/>
</dbReference>
<dbReference type="CDD" id="cd01951">
    <property type="entry name" value="lectin_L-type"/>
    <property type="match status" value="1"/>
</dbReference>
<dbReference type="Gene3D" id="2.60.120.200">
    <property type="match status" value="1"/>
</dbReference>
<dbReference type="Gene3D" id="3.10.20.320">
    <property type="entry name" value="Putative peptidoglycan bound protein (lpxtg motif)"/>
    <property type="match status" value="1"/>
</dbReference>
<dbReference type="InterPro" id="IPR015919">
    <property type="entry name" value="Cadherin-like_sf"/>
</dbReference>
<dbReference type="InterPro" id="IPR013320">
    <property type="entry name" value="ConA-like_dom_sf"/>
</dbReference>
<dbReference type="InterPro" id="IPR022263">
    <property type="entry name" value="KxYKxGKxW"/>
</dbReference>
<dbReference type="InterPro" id="IPR056573">
    <property type="entry name" value="Lectin_L-type_dom"/>
</dbReference>
<dbReference type="InterPro" id="IPR019931">
    <property type="entry name" value="LPXTG_anchor"/>
</dbReference>
<dbReference type="NCBIfam" id="TIGR03715">
    <property type="entry name" value="KxYKxGKxW"/>
    <property type="match status" value="1"/>
</dbReference>
<dbReference type="NCBIfam" id="TIGR01167">
    <property type="entry name" value="LPXTG_anchor"/>
    <property type="match status" value="1"/>
</dbReference>
<dbReference type="PANTHER" id="PTHR22928">
    <property type="entry name" value="TELOMERE-ASSOCIATED PROTEIN RIF1"/>
    <property type="match status" value="1"/>
</dbReference>
<dbReference type="PANTHER" id="PTHR22928:SF3">
    <property type="entry name" value="TELOMERE-ASSOCIATED PROTEIN RIF1"/>
    <property type="match status" value="1"/>
</dbReference>
<dbReference type="Pfam" id="PF00746">
    <property type="entry name" value="Gram_pos_anchor"/>
    <property type="match status" value="1"/>
</dbReference>
<dbReference type="Pfam" id="PF19258">
    <property type="entry name" value="KxYKxGKxW_sig"/>
    <property type="match status" value="1"/>
</dbReference>
<dbReference type="Pfam" id="PF18483">
    <property type="entry name" value="Lectin_L-type_dom"/>
    <property type="match status" value="1"/>
</dbReference>
<dbReference type="SUPFAM" id="SSF49313">
    <property type="entry name" value="Cadherin-like"/>
    <property type="match status" value="2"/>
</dbReference>
<dbReference type="SUPFAM" id="SSF49899">
    <property type="entry name" value="Concanavalin A-like lectins/glucanases"/>
    <property type="match status" value="1"/>
</dbReference>
<dbReference type="PROSITE" id="PS50847">
    <property type="entry name" value="GRAM_POS_ANCHORING"/>
    <property type="match status" value="1"/>
</dbReference>
<name>SRAP_STAAM</name>
<feature type="signal peptide" evidence="3">
    <location>
        <begin position="1"/>
        <end position="89"/>
    </location>
</feature>
<feature type="chain" id="PRO_0000273926" description="Serine-rich adhesin for platelets">
    <location>
        <begin position="90"/>
        <end position="2232"/>
    </location>
</feature>
<feature type="propeptide" id="PRO_0000273927" description="Removed by sortase" evidence="4">
    <location>
        <begin position="2233"/>
        <end position="2271"/>
    </location>
</feature>
<feature type="region of interest" description="Serine-rich repeat region 1, SRR1" evidence="3">
    <location>
        <begin position="90"/>
        <end position="230"/>
    </location>
</feature>
<feature type="region of interest" description="Disordered" evidence="5">
    <location>
        <begin position="100"/>
        <end position="229"/>
    </location>
</feature>
<feature type="region of interest" description="Non-repeat region (NRR)" evidence="3">
    <location>
        <begin position="231"/>
        <end position="751"/>
    </location>
</feature>
<feature type="region of interest" description="Disordered" evidence="5">
    <location>
        <begin position="751"/>
        <end position="791"/>
    </location>
</feature>
<feature type="region of interest" description="Serine-rich repeat region 2, SRR2" evidence="3">
    <location>
        <begin position="752"/>
        <end position="2232"/>
    </location>
</feature>
<feature type="region of interest" description="Disordered" evidence="5">
    <location>
        <begin position="806"/>
        <end position="2243"/>
    </location>
</feature>
<feature type="short sequence motif" description="LPXTG sorting signal" evidence="4">
    <location>
        <begin position="2229"/>
        <end position="2233"/>
    </location>
</feature>
<feature type="compositionally biased region" description="Polar residues" evidence="5">
    <location>
        <begin position="100"/>
        <end position="111"/>
    </location>
</feature>
<feature type="compositionally biased region" description="Low complexity" evidence="5">
    <location>
        <begin position="112"/>
        <end position="128"/>
    </location>
</feature>
<feature type="compositionally biased region" description="Polar residues" evidence="5">
    <location>
        <begin position="129"/>
        <end position="140"/>
    </location>
</feature>
<feature type="compositionally biased region" description="Low complexity" evidence="5">
    <location>
        <begin position="150"/>
        <end position="229"/>
    </location>
</feature>
<feature type="compositionally biased region" description="Low complexity" evidence="5">
    <location>
        <begin position="752"/>
        <end position="791"/>
    </location>
</feature>
<feature type="compositionally biased region" description="Low complexity" evidence="5">
    <location>
        <begin position="806"/>
        <end position="1392"/>
    </location>
</feature>
<feature type="compositionally biased region" description="Low complexity" evidence="5">
    <location>
        <begin position="1402"/>
        <end position="2214"/>
    </location>
</feature>
<feature type="modified residue" description="Pentaglycyl murein peptidoglycan amidated threonine" evidence="4">
    <location>
        <position position="2232"/>
    </location>
</feature>
<organism>
    <name type="scientific">Staphylococcus aureus (strain Mu50 / ATCC 700699)</name>
    <dbReference type="NCBI Taxonomy" id="158878"/>
    <lineage>
        <taxon>Bacteria</taxon>
        <taxon>Bacillati</taxon>
        <taxon>Bacillota</taxon>
        <taxon>Bacilli</taxon>
        <taxon>Bacillales</taxon>
        <taxon>Staphylococcaceae</taxon>
        <taxon>Staphylococcus</taxon>
    </lineage>
</organism>
<gene>
    <name type="primary">sraP</name>
    <name type="synonym">sasA</name>
    <name type="ordered locus">SAV2654</name>
</gene>
<sequence length="2271" mass="227848">MSKRQKAFHDSLANEKTRVRLYKSGKNWVKSGIKEIEMFKIMGLPFISHSLVSQDNQSISKKMTGYGLKTTAVIGGAFTVNMLHDQQAFAASDAPLTSELNTQSETVGNQNSTTIEASTSTADSTSVTKNSSSVQTSNSDTVSSEKSEKVTSTTNSTSNQQEKLTSTSESTSSKNTTSSSDTKSVASTSSTEQPINTSTNQSTASNNTSQSTTPSSVNLNKTSTTSTSTAPVKLRTFSRLAMSTFASAATTTAVTANTITVNKDNLKQYMTTSGNATYDQSTGIVTLTQDAYSQKGAITLGTRIDSNKSFHFSGKVNLGNKYEGHGNGGDGIGFAFSPGVLGETGLNGAAVGIGGLSNAFGFKLDTYHNTSKPNSAAKANADPSNVAGGGAFGAFVTTDSYGVATTYTSSSTADNAAKLNVQPTNNTFQDFDINYNGDTKVMTVKYAGQTWTRNISDWIAKSGTTNFSLSMTASTGGATNLQQVQFGTFEYTESAVTQVRYVDVTTGKDIIPPKTYSGNVDQVVTIDNQQSALTAKGYNYTSVDSSYASTYNDTNKTVKMTNAGQSVTYYFTDVKAPTVTVGNQTIEVGKTMNPVVLTTTDNGTGTVTNTVTGLPSGLSYDSATNSIIGTPTKIGQSTVTVVSTDQANNKSTTTFTINVVDTTAPTVTPIGDQSSEVYSPISPIKIATQDNSGNAVTNTVTGLPSGLTFDSTNNTISGTPTNIGTSTISIVSTDASGNKTTTTFKYEVTRNSMSDSVSTSGSTQQSQSVSTSKADSQSASTSTSGSIVVSTSASTSKSTSVSLSDSVSASKSLSTSESNSVSSSTSTSLVNSQSVSSSMSGSVSKSTSLSDSISNSNSTEKSESLSTSTSDSLRTSTSLSDSLSMSTSGSLSKSQSLSTSISGSSSTSASLSDSTSNAISTSTSLSESASTSDSISISNSIANSQSASTSKSDSQSTSISLSTSDSKSMSTSESLSDSTSTSGSVSGSLSIAASQSVSTSTSDSMSTSEIVSDSISTSGSLSASDSKSMSVSSSMSTSQSGSTSESLSDSQSTSDSDSKSLSLSTSQSGSTSTSTSTSASVRTSESQSTSGSMSASQSDSMSISTSFSDSTSDSKSASTASSESISQSASTSTSGSVSTSTSLSTSNSERTSTSVSDSTSLSTSESDSISESTSTSDSISEAISASESTSISLSESNSTSDSESQSASAFLSESLSESTSESTSESVSSSTSESTSLSDSTSESGSTSTSLSNSTSGSASISTSTSISESTSTFKSESVSTSLSMSTSTSLSNSTSLSTSLSDSTSDSKSDSLSTSMSTSDSISTSKSDSISTSTSLSGSTSESESDSTSSSESKSDSTSMSISMSQSTSGSTSTSTSTSLSDSTSTSLSLSASMNQSGVDSNSASQSASNSTSTSTSESDSQSTSTYTSQSTSQSESTSTSTSLSDSTSISKSTSQSGSTSTSASLSGSESESDSQSISTSASESTSESASTSLSDSTSTSNSGSASTSTSLSNSASASESDSSSTSLSDSTSASMQSSESDSQSTSASLSDSLSTSTSNRMSTIASLSTSVSTSESGSTSESTSESDSTSTSLSDSQSTSRSTSASGSASTSTSTSDSRSTSASTSTSMRTSTSDSQSMSLSTSTSTSMSDSTSLSDSVSDSTSDSTSASTSGSMSVSISLSDSTSTSTSASEVMSASISDSQSMSESVNDSESVSESNSESDSKSMSGSTSVSDSGSLSVSTSLRKSESVSESSSLSGSQSMSDSVSTSDSSSLSVSTSLRSSESVSESDSLSDSKSTSGSTSTSTSGSLSTSTSLSGSESVSESTSLSDSISMSDSTSTSDSDSLSGSISLSGSTSLSTSDSLSDSKSLSSSQSMSGSESTSTSVSDSQSSSTSNSQFDSMSISASESDSMSTSDSSNISGSNSTSTSLSTSDSMSGSVSVSTSTSLSDSISGSTSVSDSSSTSTSTSLSDSMSQSQSTSTSASGSLSTSISTSMSMSASTSSSQSTSVSTSLSTSDSISDSTSISISGSQSTVESESTSDSTSISDSESLSTSDSDSTSTSTSDSTSGSTSTSISESLSTSGSGSTSVSDSTSMSESDSTSVSMSQDKSDSTSISDSESVSTSTSTSLSTSDSTSTSESLSTSMSGSQSISDSTSTSMSGSTSTSESNSMHPSDSMSMHHTHSTSTSRLSSEATTSTSESQSTLSATSEVTKHNGTPAQSEKRLPDTGDSIKQNGLLGGVMTLLVGLGLMKRKKKKDENDQDDSQA</sequence>
<keyword id="KW-0130">Cell adhesion</keyword>
<keyword id="KW-0134">Cell wall</keyword>
<keyword id="KW-0325">Glycoprotein</keyword>
<keyword id="KW-0572">Peptidoglycan-anchor</keyword>
<keyword id="KW-0964">Secreted</keyword>
<keyword id="KW-0732">Signal</keyword>
<keyword id="KW-0843">Virulence</keyword>
<comment type="function">
    <text evidence="1 3">Mediates binding to human platelets, possibly through a receptor-ligand interaction. Probably associated with virulence in endovascular infection (By similarity).</text>
</comment>
<comment type="subcellular location">
    <subcellularLocation>
        <location evidence="4">Secreted</location>
        <location evidence="4">Cell wall</location>
        <topology evidence="4">Peptidoglycan-anchor</topology>
    </subcellularLocation>
    <text evidence="3">Exported by the accessory SecA2/SecY2 system. Anchored to the cell wall by sortase A (By similarity).</text>
</comment>
<comment type="PTM">
    <text evidence="1 3">Proteolytically cleaved by a metalloprotease.</text>
</comment>
<comment type="PTM">
    <text evidence="2 3">Glycosylated (By similarity). It is probable that most of the Ser residues in SSR1 and SSR2 are O-GlcNAcylated. Sequential glycosylation by sugar transferases are able to generate complex sugar polymorphisms (By similarity).</text>
</comment>
<comment type="similarity">
    <text evidence="6">Belongs to the serine-rich repeat protein (SRRP) family.</text>
</comment>
<protein>
    <recommendedName>
        <fullName>Serine-rich adhesin for platelets</fullName>
    </recommendedName>
    <alternativeName>
        <fullName evidence="6">Adhesin SraP</fullName>
    </alternativeName>
    <alternativeName>
        <fullName>Staphylococcus aureus surface protein A</fullName>
    </alternativeName>
</protein>
<accession>Q99QY4</accession>
<proteinExistence type="inferred from homology"/>
<reference key="1">
    <citation type="journal article" date="2001" name="Lancet">
        <title>Whole genome sequencing of meticillin-resistant Staphylococcus aureus.</title>
        <authorList>
            <person name="Kuroda M."/>
            <person name="Ohta T."/>
            <person name="Uchiyama I."/>
            <person name="Baba T."/>
            <person name="Yuzawa H."/>
            <person name="Kobayashi I."/>
            <person name="Cui L."/>
            <person name="Oguchi A."/>
            <person name="Aoki K."/>
            <person name="Nagai Y."/>
            <person name="Lian J.-Q."/>
            <person name="Ito T."/>
            <person name="Kanamori M."/>
            <person name="Matsumaru H."/>
            <person name="Maruyama A."/>
            <person name="Murakami H."/>
            <person name="Hosoyama A."/>
            <person name="Mizutani-Ui Y."/>
            <person name="Takahashi N.K."/>
            <person name="Sawano T."/>
            <person name="Inoue R."/>
            <person name="Kaito C."/>
            <person name="Sekimizu K."/>
            <person name="Hirakawa H."/>
            <person name="Kuhara S."/>
            <person name="Goto S."/>
            <person name="Yabuzaki J."/>
            <person name="Kanehisa M."/>
            <person name="Yamashita A."/>
            <person name="Oshima K."/>
            <person name="Furuya K."/>
            <person name="Yoshino C."/>
            <person name="Shiba T."/>
            <person name="Hattori M."/>
            <person name="Ogasawara N."/>
            <person name="Hayashi H."/>
            <person name="Hiramatsu K."/>
        </authorList>
    </citation>
    <scope>NUCLEOTIDE SEQUENCE [LARGE SCALE GENOMIC DNA]</scope>
    <source>
        <strain>Mu50 / ATCC 700699</strain>
    </source>
</reference>